<keyword id="KW-0002">3D-structure</keyword>
<keyword id="KW-0058">Aromatic hydrocarbons catabolism</keyword>
<keyword id="KW-0378">Hydrolase</keyword>
<keyword id="KW-1185">Reference proteome</keyword>
<evidence type="ECO:0000269" key="1">
    <source>
    </source>
</evidence>
<evidence type="ECO:0000269" key="2">
    <source>
    </source>
</evidence>
<evidence type="ECO:0000269" key="3">
    <source>
    </source>
</evidence>
<evidence type="ECO:0000305" key="4"/>
<evidence type="ECO:0007829" key="5">
    <source>
        <dbReference type="PDB" id="2PU7"/>
    </source>
</evidence>
<evidence type="ECO:0007829" key="6">
    <source>
        <dbReference type="PDB" id="2PUJ"/>
    </source>
</evidence>
<sequence>MTALTESSTSKFVKINEKGFSDFNIHYNEAGNGETVIMLHGGGPGAGGWSNYYRNVGPFVDAGYRVILKDSPGFNKSDAVVMDEQRGLVNARAVKGLMDALDIDRAHLVGNSMGGATALNFALEYPDRIGKLILMGPGGLGPSMFAPMPMEGIKLLFKLYAEPSYETLKQMLQVFLYDQSLITEELLQGRWEAIQRQPEHLKNFLISAQKAPLSTWDVTARLGEIKAKTFITWGRDDRFVPLDHGLKLLWNIDDARLHVFSKCGHWAQWEHADEFNRLVIDFLRHA</sequence>
<reference key="1">
    <citation type="journal article" date="1993" name="Gene">
        <title>Genetic analysis of a Pseudomonas locus encoding a pathway for biphenyl/polychlorinated biphenyl degradation.</title>
        <authorList>
            <person name="Hofer B."/>
            <person name="Eltis L.D."/>
            <person name="Dowling D.N."/>
            <person name="Timmis K.N."/>
        </authorList>
    </citation>
    <scope>NUCLEOTIDE SEQUENCE [GENOMIC DNA]</scope>
</reference>
<reference key="2">
    <citation type="journal article" date="2006" name="Proc. Natl. Acad. Sci. U.S.A.">
        <title>Burkholderia xenovorans LB400 harbors a multi-replicon, 9.73-Mbp genome shaped for versatility.</title>
        <authorList>
            <person name="Chain P.S.G."/>
            <person name="Denef V.J."/>
            <person name="Konstantinidis K.T."/>
            <person name="Vergez L.M."/>
            <person name="Agullo L."/>
            <person name="Reyes V.L."/>
            <person name="Hauser L."/>
            <person name="Cordova M."/>
            <person name="Gomez L."/>
            <person name="Gonzalez M."/>
            <person name="Land M."/>
            <person name="Lao V."/>
            <person name="Larimer F."/>
            <person name="LiPuma J.J."/>
            <person name="Mahenthiralingam E."/>
            <person name="Malfatti S.A."/>
            <person name="Marx C.J."/>
            <person name="Parnell J.J."/>
            <person name="Ramette A."/>
            <person name="Richardson P."/>
            <person name="Seeger M."/>
            <person name="Smith D."/>
            <person name="Spilker T."/>
            <person name="Sul W.J."/>
            <person name="Tsoi T.V."/>
            <person name="Ulrich L.E."/>
            <person name="Zhulin I.B."/>
            <person name="Tiedje J.M."/>
        </authorList>
    </citation>
    <scope>NUCLEOTIDE SEQUENCE [LARGE SCALE GENOMIC DNA]</scope>
    <source>
        <strain>LB400</strain>
    </source>
</reference>
<reference key="3">
    <citation type="journal article" date="2006" name="Biochemistry">
        <title>Kinetic and structural insight into the mechanism of BphD, a C-C bond hydrolase from the biphenyl degradation pathway.</title>
        <authorList>
            <person name="Horsman G.P."/>
            <person name="Ke J."/>
            <person name="Dai S."/>
            <person name="Seah S.Y.K."/>
            <person name="Bolin J.T."/>
            <person name="Eltis L.D."/>
        </authorList>
    </citation>
    <scope>X-RAY CRYSTALLOGRAPHY (1.6 ANGSTROMS) OF MUTANT ALA-112 IN COMPLEXES WITH ANALOGS SUBSTRATE</scope>
    <scope>FUNCTION</scope>
    <scope>SUBUNIT</scope>
</reference>
<reference key="4">
    <citation type="journal article" date="2007" name="J. Biol. Chem.">
        <title>The tautomeric half-reaction of BphD, a C-C bond hydrolase. Kinetic and structural evidence supporting a key role for histidine 265 of the catalytic triad.</title>
        <authorList>
            <person name="Horsman G.P."/>
            <person name="Bhowmik S."/>
            <person name="Seah S.Y."/>
            <person name="Kumar P."/>
            <person name="Bolin J.T."/>
            <person name="Eltis L.D."/>
        </authorList>
    </citation>
    <scope>X-RAY CRYSTALLOGRAPHY (2.3 ANGSTROMS) OF MUTANT ALA-112 AND ALA-112/ALA-265 IN COMPLEXES WITH ANALOGS SUBSTRATE</scope>
    <scope>MUTAGENESIS OF SER-112 AND HIS-265</scope>
    <scope>REACTION MECHANISM</scope>
</reference>
<reference key="5">
    <citation type="journal article" date="2007" name="J. Biol. Chem.">
        <title>The molecular basis for inhibition of BphD, a C-C bond hydrolase involved in polychlorinated biphenyls degradation: large 3-substituents prevent tautomerization.</title>
        <authorList>
            <person name="Bhowmik S."/>
            <person name="Horsman G.P."/>
            <person name="Bolin J.T."/>
            <person name="Eltis L.D."/>
        </authorList>
    </citation>
    <scope>X-RAY CRYSTALLOGRAPHY (1.7 ANGSTROMS) OF 4-286 MUTANT ALA-112 IN COMPLEXES WITH ANALOGS SUBSTRATE</scope>
    <scope>BIOPHYSICOCHEMICAL PROPERTIES</scope>
    <scope>INHIBITORS</scope>
</reference>
<proteinExistence type="evidence at protein level"/>
<protein>
    <recommendedName>
        <fullName>2-hydroxy-6-oxo-6-phenylhexa-2,4-dienoate hydrolase</fullName>
        <shortName>HOPDA hydrolase</shortName>
        <ecNumber>3.7.1.8</ecNumber>
    </recommendedName>
    <alternativeName>
        <fullName>2,6-dioxo-6-phenylhexa-3-enoate hydrolase</fullName>
    </alternativeName>
</protein>
<comment type="function">
    <text evidence="1">Catalyzes an unusual C-C bond hydrolysis of 2-hydroxy-6-oxo-6-phenylhexa-2,4-dienoic acid (HOPDA) to produce benzoic acid and 2-hydroxy-2,4-pentadienoic acid (HPD).</text>
</comment>
<comment type="catalytic activity">
    <reaction>
        <text>2,6-dioxo-6-phenylhexa-3-enoate + H2O = 2-oxopent-4-enoate + benzoate + H(+)</text>
        <dbReference type="Rhea" id="RHEA:17161"/>
        <dbReference type="ChEBI" id="CHEBI:11641"/>
        <dbReference type="ChEBI" id="CHEBI:15377"/>
        <dbReference type="ChEBI" id="CHEBI:15378"/>
        <dbReference type="ChEBI" id="CHEBI:16150"/>
        <dbReference type="ChEBI" id="CHEBI:64675"/>
        <dbReference type="EC" id="3.7.1.8"/>
    </reaction>
</comment>
<comment type="activity regulation">
    <text>Inhibited by 3-Cl HOPDA.</text>
</comment>
<comment type="biophysicochemical properties">
    <kinetics>
        <KM evidence="3">0.2 uM for HOPDA</KM>
        <KM evidence="3">0.54 uM for 3-Cl HOPDA</KM>
        <KM evidence="3">4.8 uM for 3-F HOPDA</KM>
    </kinetics>
</comment>
<comment type="pathway">
    <text>Xenobiotic degradation; biphenyl degradation; 2-hydroxy-2,4-pentadienoate and benzoate from biphenyl: step 4/4.</text>
</comment>
<comment type="subunit">
    <text evidence="1">Homodimer.</text>
</comment>
<comment type="similarity">
    <text evidence="4">Belongs to the AB hydrolase superfamily. BphD family.</text>
</comment>
<dbReference type="EC" id="3.7.1.8"/>
<dbReference type="EMBL" id="X66123">
    <property type="protein sequence ID" value="CAA46911.1"/>
    <property type="molecule type" value="Genomic_DNA"/>
</dbReference>
<dbReference type="EMBL" id="CP000272">
    <property type="protein sequence ID" value="ABE37048.1"/>
    <property type="molecule type" value="Genomic_DNA"/>
</dbReference>
<dbReference type="RefSeq" id="WP_011494293.1">
    <property type="nucleotide sequence ID" value="NZ_CP008761.1"/>
</dbReference>
<dbReference type="PDB" id="2OG1">
    <property type="method" value="X-ray"/>
    <property type="resolution" value="1.60 A"/>
    <property type="chains" value="A/B=1-286"/>
</dbReference>
<dbReference type="PDB" id="2PU5">
    <property type="method" value="X-ray"/>
    <property type="resolution" value="2.30 A"/>
    <property type="chains" value="A/B=1-286"/>
</dbReference>
<dbReference type="PDB" id="2PU7">
    <property type="method" value="X-ray"/>
    <property type="resolution" value="2.07 A"/>
    <property type="chains" value="A=1-286"/>
</dbReference>
<dbReference type="PDB" id="2PUH">
    <property type="method" value="X-ray"/>
    <property type="resolution" value="1.82 A"/>
    <property type="chains" value="A=1-286"/>
</dbReference>
<dbReference type="PDB" id="2PUJ">
    <property type="method" value="X-ray"/>
    <property type="resolution" value="1.57 A"/>
    <property type="chains" value="A=1-286"/>
</dbReference>
<dbReference type="PDB" id="2RHT">
    <property type="method" value="X-ray"/>
    <property type="resolution" value="1.70 A"/>
    <property type="chains" value="A=4-286"/>
</dbReference>
<dbReference type="PDB" id="2RHW">
    <property type="method" value="X-ray"/>
    <property type="resolution" value="1.57 A"/>
    <property type="chains" value="A=4-286"/>
</dbReference>
<dbReference type="PDB" id="2RI6">
    <property type="method" value="X-ray"/>
    <property type="resolution" value="1.68 A"/>
    <property type="chains" value="A=4-286"/>
</dbReference>
<dbReference type="PDB" id="3V1K">
    <property type="method" value="X-ray"/>
    <property type="resolution" value="2.13 A"/>
    <property type="chains" value="A/B=1-286"/>
</dbReference>
<dbReference type="PDB" id="3V1L">
    <property type="method" value="X-ray"/>
    <property type="resolution" value="2.11 A"/>
    <property type="chains" value="A=1-286"/>
</dbReference>
<dbReference type="PDB" id="3V1M">
    <property type="method" value="X-ray"/>
    <property type="resolution" value="1.92 A"/>
    <property type="chains" value="A=1-286"/>
</dbReference>
<dbReference type="PDB" id="3V1N">
    <property type="method" value="X-ray"/>
    <property type="resolution" value="1.59 A"/>
    <property type="chains" value="A=1-286"/>
</dbReference>
<dbReference type="PDBsum" id="2OG1"/>
<dbReference type="PDBsum" id="2PU5"/>
<dbReference type="PDBsum" id="2PU7"/>
<dbReference type="PDBsum" id="2PUH"/>
<dbReference type="PDBsum" id="2PUJ"/>
<dbReference type="PDBsum" id="2RHT"/>
<dbReference type="PDBsum" id="2RHW"/>
<dbReference type="PDBsum" id="2RI6"/>
<dbReference type="PDBsum" id="3V1K"/>
<dbReference type="PDBsum" id="3V1L"/>
<dbReference type="PDBsum" id="3V1M"/>
<dbReference type="PDBsum" id="3V1N"/>
<dbReference type="SMR" id="P47229"/>
<dbReference type="STRING" id="266265.Bxe_C1186"/>
<dbReference type="DrugBank" id="DB07915">
    <property type="generic name" value="(2E,4E)-2-Hydroxy-6-oxo-6-phenyl-2,4-hexadienoic acid"/>
</dbReference>
<dbReference type="DrugBank" id="DB07516">
    <property type="generic name" value="(2Z,4E)-3-chloro-2-hydroxy-6-oxo-6-phenylhexa-2,4-dienoic acid"/>
</dbReference>
<dbReference type="DrugBank" id="DB07911">
    <property type="generic name" value="(3E)-2,6-DIOXO-6-PHENYLHEX-3-ENOATE"/>
</dbReference>
<dbReference type="DrugBank" id="DB07510">
    <property type="generic name" value="3-fluoro-6-(4-fluorophenyl)-2-hydroxy-6-oxohexa-2,4-dienoic acid"/>
</dbReference>
<dbReference type="ESTHER" id="burxl-bphD">
    <property type="family name" value="Carbon-carbon_bond_hydrolase"/>
</dbReference>
<dbReference type="MEROPS" id="S33.016"/>
<dbReference type="KEGG" id="bxb:DR64_8619"/>
<dbReference type="KEGG" id="bxe:Bxe_C1186"/>
<dbReference type="eggNOG" id="COG0596">
    <property type="taxonomic scope" value="Bacteria"/>
</dbReference>
<dbReference type="OrthoDB" id="9799989at2"/>
<dbReference type="BRENDA" id="3.7.1.8">
    <property type="organism ID" value="7691"/>
</dbReference>
<dbReference type="SABIO-RK" id="P47229"/>
<dbReference type="UniPathway" id="UPA00155">
    <property type="reaction ID" value="UER00253"/>
</dbReference>
<dbReference type="EvolutionaryTrace" id="P47229"/>
<dbReference type="Proteomes" id="UP000001817">
    <property type="component" value="Chromosome 3"/>
</dbReference>
<dbReference type="GO" id="GO:0016020">
    <property type="term" value="C:membrane"/>
    <property type="evidence" value="ECO:0007669"/>
    <property type="project" value="TreeGrafter"/>
</dbReference>
<dbReference type="GO" id="GO:0018774">
    <property type="term" value="F:2,6-dioxo-6-phenylhexa-3-enoate hydrolase activity"/>
    <property type="evidence" value="ECO:0007669"/>
    <property type="project" value="RHEA"/>
</dbReference>
<dbReference type="GO" id="GO:0018771">
    <property type="term" value="F:2-hydroxy-6-oxonona-2,4-dienedioate hydrolase activity"/>
    <property type="evidence" value="ECO:0007669"/>
    <property type="project" value="UniProtKB-UniRule"/>
</dbReference>
<dbReference type="GO" id="GO:0047372">
    <property type="term" value="F:monoacylglycerol lipase activity"/>
    <property type="evidence" value="ECO:0007669"/>
    <property type="project" value="TreeGrafter"/>
</dbReference>
<dbReference type="GO" id="GO:0046464">
    <property type="term" value="P:acylglycerol catabolic process"/>
    <property type="evidence" value="ECO:0007669"/>
    <property type="project" value="TreeGrafter"/>
</dbReference>
<dbReference type="GO" id="GO:0070980">
    <property type="term" value="P:biphenyl catabolic process"/>
    <property type="evidence" value="ECO:0007669"/>
    <property type="project" value="UniProtKB-UniRule"/>
</dbReference>
<dbReference type="Gene3D" id="3.40.50.1820">
    <property type="entry name" value="alpha/beta hydrolase"/>
    <property type="match status" value="1"/>
</dbReference>
<dbReference type="HAMAP" id="MF_01688">
    <property type="entry name" value="Biphenyl_BphD"/>
    <property type="match status" value="1"/>
</dbReference>
<dbReference type="InterPro" id="IPR000073">
    <property type="entry name" value="AB_hydrolase_1"/>
</dbReference>
<dbReference type="InterPro" id="IPR029058">
    <property type="entry name" value="AB_hydrolase_fold"/>
</dbReference>
<dbReference type="InterPro" id="IPR050266">
    <property type="entry name" value="AB_hydrolase_sf"/>
</dbReference>
<dbReference type="InterPro" id="IPR000639">
    <property type="entry name" value="Epox_hydrolase-like"/>
</dbReference>
<dbReference type="InterPro" id="IPR017727">
    <property type="entry name" value="HOPD_hydrolase_BphD"/>
</dbReference>
<dbReference type="NCBIfam" id="TIGR03343">
    <property type="entry name" value="biphenyl_bphD"/>
    <property type="match status" value="1"/>
</dbReference>
<dbReference type="PANTHER" id="PTHR43798">
    <property type="entry name" value="MONOACYLGLYCEROL LIPASE"/>
    <property type="match status" value="1"/>
</dbReference>
<dbReference type="PANTHER" id="PTHR43798:SF5">
    <property type="entry name" value="MONOACYLGLYCEROL LIPASE ABHD6"/>
    <property type="match status" value="1"/>
</dbReference>
<dbReference type="Pfam" id="PF00561">
    <property type="entry name" value="Abhydrolase_1"/>
    <property type="match status" value="1"/>
</dbReference>
<dbReference type="PRINTS" id="PR00111">
    <property type="entry name" value="ABHYDROLASE"/>
</dbReference>
<dbReference type="PRINTS" id="PR00412">
    <property type="entry name" value="EPOXHYDRLASE"/>
</dbReference>
<dbReference type="SUPFAM" id="SSF53474">
    <property type="entry name" value="alpha/beta-Hydrolases"/>
    <property type="match status" value="1"/>
</dbReference>
<name>BPHD_PARXL</name>
<organism>
    <name type="scientific">Paraburkholderia xenovorans (strain LB400)</name>
    <dbReference type="NCBI Taxonomy" id="266265"/>
    <lineage>
        <taxon>Bacteria</taxon>
        <taxon>Pseudomonadati</taxon>
        <taxon>Pseudomonadota</taxon>
        <taxon>Betaproteobacteria</taxon>
        <taxon>Burkholderiales</taxon>
        <taxon>Burkholderiaceae</taxon>
        <taxon>Paraburkholderia</taxon>
    </lineage>
</organism>
<feature type="chain" id="PRO_0000207052" description="2-hydroxy-6-oxo-6-phenylhexa-2,4-dienoate hydrolase">
    <location>
        <begin position="1"/>
        <end position="286"/>
    </location>
</feature>
<feature type="active site" description="Proton acceptor">
    <location>
        <position position="265"/>
    </location>
</feature>
<feature type="binding site">
    <location>
        <begin position="42"/>
        <end position="43"/>
    </location>
    <ligand>
        <name>substrate</name>
    </ligand>
</feature>
<feature type="binding site">
    <location>
        <position position="51"/>
    </location>
    <ligand>
        <name>substrate</name>
    </ligand>
</feature>
<feature type="binding site">
    <location>
        <position position="111"/>
    </location>
    <ligand>
        <name>substrate</name>
    </ligand>
</feature>
<feature type="binding site">
    <location>
        <position position="180"/>
    </location>
    <ligand>
        <name>substrate</name>
    </ligand>
</feature>
<feature type="binding site">
    <location>
        <position position="190"/>
    </location>
    <ligand>
        <name>substrate</name>
    </ligand>
</feature>
<feature type="binding site">
    <location>
        <position position="266"/>
    </location>
    <ligand>
        <name>substrate</name>
    </ligand>
</feature>
<feature type="site" description="Transition state stabilizer">
    <location>
        <position position="112"/>
    </location>
</feature>
<feature type="mutagenesis site" description="Catalyzes the tautomerisation of HOPDA. Extremely low hydrolase activity; when associated with A-265." evidence="2">
    <original>S</original>
    <variation>A</variation>
    <location>
        <position position="112"/>
    </location>
</feature>
<feature type="mutagenesis site" description="Unable to catalyze the tautomerisation of HOPDA. Extremely low hydrolase activity; when associated with A-112." evidence="2">
    <original>H</original>
    <variation>A</variation>
    <location>
        <position position="265"/>
    </location>
</feature>
<feature type="helix" evidence="6">
    <location>
        <begin position="6"/>
        <end position="9"/>
    </location>
</feature>
<feature type="strand" evidence="6">
    <location>
        <begin position="10"/>
        <end position="15"/>
    </location>
</feature>
<feature type="strand" evidence="5">
    <location>
        <begin position="17"/>
        <end position="19"/>
    </location>
</feature>
<feature type="strand" evidence="6">
    <location>
        <begin position="21"/>
        <end position="30"/>
    </location>
</feature>
<feature type="strand" evidence="6">
    <location>
        <begin position="33"/>
        <end position="39"/>
    </location>
</feature>
<feature type="helix" evidence="6">
    <location>
        <begin position="48"/>
        <end position="52"/>
    </location>
</feature>
<feature type="turn" evidence="6">
    <location>
        <begin position="53"/>
        <end position="55"/>
    </location>
</feature>
<feature type="helix" evidence="6">
    <location>
        <begin position="56"/>
        <end position="61"/>
    </location>
</feature>
<feature type="strand" evidence="6">
    <location>
        <begin position="65"/>
        <end position="69"/>
    </location>
</feature>
<feature type="helix" evidence="6">
    <location>
        <begin position="86"/>
        <end position="100"/>
    </location>
</feature>
<feature type="strand" evidence="6">
    <location>
        <begin position="106"/>
        <end position="111"/>
    </location>
</feature>
<feature type="helix" evidence="6">
    <location>
        <begin position="113"/>
        <end position="124"/>
    </location>
</feature>
<feature type="helix" evidence="6">
    <location>
        <begin position="126"/>
        <end position="128"/>
    </location>
</feature>
<feature type="strand" evidence="6">
    <location>
        <begin position="129"/>
        <end position="136"/>
    </location>
</feature>
<feature type="strand" evidence="6">
    <location>
        <begin position="144"/>
        <end position="146"/>
    </location>
</feature>
<feature type="helix" evidence="6">
    <location>
        <begin position="151"/>
        <end position="161"/>
    </location>
</feature>
<feature type="helix" evidence="6">
    <location>
        <begin position="165"/>
        <end position="175"/>
    </location>
</feature>
<feature type="helix" evidence="6">
    <location>
        <begin position="179"/>
        <end position="181"/>
    </location>
</feature>
<feature type="helix" evidence="6">
    <location>
        <begin position="184"/>
        <end position="196"/>
    </location>
</feature>
<feature type="helix" evidence="6">
    <location>
        <begin position="198"/>
        <end position="210"/>
    </location>
</feature>
<feature type="helix" evidence="6">
    <location>
        <begin position="213"/>
        <end position="216"/>
    </location>
</feature>
<feature type="helix" evidence="6">
    <location>
        <begin position="219"/>
        <end position="224"/>
    </location>
</feature>
<feature type="strand" evidence="6">
    <location>
        <begin position="229"/>
        <end position="234"/>
    </location>
</feature>
<feature type="strand" evidence="6">
    <location>
        <begin position="238"/>
        <end position="240"/>
    </location>
</feature>
<feature type="helix" evidence="6">
    <location>
        <begin position="243"/>
        <end position="251"/>
    </location>
</feature>
<feature type="strand" evidence="6">
    <location>
        <begin position="252"/>
        <end position="262"/>
    </location>
</feature>
<feature type="helix" evidence="6">
    <location>
        <begin position="267"/>
        <end position="270"/>
    </location>
</feature>
<feature type="helix" evidence="6">
    <location>
        <begin position="272"/>
        <end position="285"/>
    </location>
</feature>
<gene>
    <name type="primary">bphD</name>
    <name type="ordered locus">Bxeno_C1120</name>
    <name type="ORF">Bxe_C1186</name>
</gene>
<accession>P47229</accession>
<accession>Q13FU1</accession>